<keyword id="KW-0009">Actin-binding</keyword>
<keyword id="KW-0965">Cell junction</keyword>
<keyword id="KW-1003">Cell membrane</keyword>
<keyword id="KW-0963">Cytoplasm</keyword>
<keyword id="KW-0206">Cytoskeleton</keyword>
<keyword id="KW-0217">Developmental protein</keyword>
<keyword id="KW-0472">Membrane</keyword>
<keyword id="KW-0493">Microtubule</keyword>
<keyword id="KW-1185">Reference proteome</keyword>
<keyword id="KW-0796">Tight junction</keyword>
<accession>Q09JY9</accession>
<reference key="1">
    <citation type="journal article" date="2006" name="Development">
        <title>Shroom2 (APXL) regulates melanosome biogenesis and localization in the retinal pigment epithelium.</title>
        <authorList>
            <person name="Fairbank P.D."/>
            <person name="Lee C."/>
            <person name="Ellis A."/>
            <person name="Hildebrand J.D."/>
            <person name="Gross J.M."/>
            <person name="Wallingford J.B."/>
        </authorList>
    </citation>
    <scope>NUCLEOTIDE SEQUENCE [MRNA]</scope>
    <scope>FUNCTION</scope>
    <scope>DEVELOPMENTAL STAGE</scope>
</reference>
<evidence type="ECO:0000250" key="1"/>
<evidence type="ECO:0000255" key="2">
    <source>
        <dbReference type="PROSITE-ProRule" id="PRU00143"/>
    </source>
</evidence>
<evidence type="ECO:0000255" key="3">
    <source>
        <dbReference type="PROSITE-ProRule" id="PRU00637"/>
    </source>
</evidence>
<evidence type="ECO:0000255" key="4">
    <source>
        <dbReference type="PROSITE-ProRule" id="PRU00638"/>
    </source>
</evidence>
<evidence type="ECO:0000256" key="5">
    <source>
        <dbReference type="SAM" id="MobiDB-lite"/>
    </source>
</evidence>
<evidence type="ECO:0000269" key="6">
    <source>
    </source>
</evidence>
<evidence type="ECO:0000305" key="7"/>
<gene>
    <name type="primary">shroom2</name>
    <name type="synonym">apxl</name>
</gene>
<protein>
    <recommendedName>
        <fullName>Protein Shroom2</fullName>
    </recommendedName>
    <alternativeName>
        <fullName>Protein Apxl</fullName>
    </alternativeName>
</protein>
<proteinExistence type="evidence at transcript level"/>
<comment type="function">
    <text evidence="6">May be involved in endothelial cell morphology changes during cell spreading. Required for eye pigmentation. In the retinal pigment epithelium, regulates the biogenesis of melanosomes and promotes their association with the apical cell surface by inducing gamma-tubulin redistribution.</text>
</comment>
<comment type="subunit">
    <text evidence="1">Interacts with F-actin.</text>
</comment>
<comment type="subcellular location">
    <subcellularLocation>
        <location evidence="1">Apical cell membrane</location>
    </subcellularLocation>
    <subcellularLocation>
        <location evidence="1">Cell junction</location>
        <location evidence="1">Tight junction</location>
    </subcellularLocation>
    <subcellularLocation>
        <location evidence="1">Cytoplasm</location>
        <location evidence="1">Cytoskeleton</location>
    </subcellularLocation>
    <text evidence="1">Associates with cortical F-actin.</text>
</comment>
<comment type="developmental stage">
    <text evidence="6">At stage 25, expressed throughout the eye field. At stage 40, expression becomes restricted to the retinal pigment epithelium.</text>
</comment>
<comment type="domain">
    <text evidence="1">The ASD1 domain mediates F-actin binding.</text>
</comment>
<comment type="similarity">
    <text evidence="7">Belongs to the shroom family.</text>
</comment>
<sequence length="1726" mass="195259">MLVLGCLQCFTSAWGFASRRICHSSSATPGQHSVGLGHGYQHGAQSWAERFLLRYKGLLWFVGSRAHSGGEETNGKLQAGGCYSYWRGSLGIYFERGKEHGEPLIITKVEDGNKAADILMAGDEIVNINDQQLLGYRQEAICLVKGSHKILKMIVKRRNDISYRPHSWHSNKLIESAMDTVTPQMSNASPFWNARYRSSSSSHDLSNPWDQTSLQRNSGHFSSMGSMDSIDQTYQFGRLSSAKSNNSIDYVGSQNKRDSAYGSFSASFSTPDHTLSKTASASTENILYKNNEWDNTKLGYGKTSPSMNEVRRSADRQVLQSTSINETSKIQRTEDNTEPRYSGRSNFGPVWNIPDKKKTASPPPPPPPQRSDSYAVTKIHEKPTNLMHLDASSTQHFNVANRSQAKPDWSLEISEQQRPIRAHDRTVADTRRTSNSSYHAGLNADQGLSPYKDKYPSNLPNVSRIQASLSTNDVRFAQPAYNYHHQRQYSDESTLFQSTRTSAQHKSQQQPMKYESSVNQVPSDLTYVYHPHQFRAPATSAGFSSGKQNVENNGQNHFHVVSIKHPQGNTTHHQFKEEENYAPEVNSGRKSVQPENTVISIEIPAYSLPQESFEPSQINCEKNYLKISEKKDNYLGNNEQIINKTTGYSEEKCNDRFSQLDHSEKGSYRSSQDYSWRKEENKITPLVTPMLHSLAQEGRNRSESFPDTGNEKLSFPDAGKQSRRSDRFATTLRNEIQQRRARLQKSKSTAALTESNETETSDNWKQDSLESMSPTSEGSFSSTYRSHLQEAQARVLRATSFKRRDLDTGISDHLSLFQDRNMQISSFSGLSLDPVQPKKNTAVNSSQNVSRIGARKRFTTQQKLMSYSEPEKINEVGVEDQYNFRTENSTKRTVGSFADRWKFFEETSKCAQPKVPPKVVSSSQSEETSEIAINRDYAKSSEGQESKRALAVSGQNPADENGFPDKVTTERRQRLGTFAEYEASWKEQKTQLERKNSGRCHSADNILDADLEQNPKAQYIHERSKSSPTTDFYAQAAAVESKQQSESVRRDTENSNSTHCRSSTGDSPTRTVEAGDQCGATNEQEVLTCNTKWKPHDKSFPIPETSNESQQSRARSGTLPNDYRFAHENVNQGNRDISFSAVPISEACPDFSNADSDQLQDHPSVFKKRSAAPQRPPPPKLENKYWRQNGSSSSLATSSESLLTAQARRAQSYSPSSQDTFPPQSLQKQSPSTYPDKNPSIHIYDYQLSVPPENDRYHLEKKYFESELSSKSHLQIPGMEPSRSPSPQFAPQKLTDKPPLLVPEENLSRIERVIDNTTVKMVPIKIVHSETHAEKESRHNLLSAIEPTALPTGLAKDQLKTLSTSEQSYSRFCAYTRQESREEEESRVTDLYSCQRNAEDDNENDVSSLAPSNAKSKDAIYADLKSEELVREIVDKDKSLADILDPNAKMRTTMDLMEGIFPKDEHLLEEAQQRRKHLPKIPSPRSTDDKKDEQNVPSAVSLTTSSTYYSTSAAKAELLIKMKDMQEQQHIAENSEDELGQNLSEKKQELIDSISKKLQVLRDAKETLLEDVQCNNALGEEVEIIVKEVCKPNEFDKFRMFIGDLEKIVNLLLSLSGRLARVENALNNLDETVSPEERKTLLEKRKLLTRQHEDAKELKENLDRRERTVYEILANYLNEENLADYEHFVKMKSALILEQRELEDKIKLRESQLKCLTDSLPLDRIK</sequence>
<dbReference type="EMBL" id="DQ886532">
    <property type="protein sequence ID" value="ABI63573.1"/>
    <property type="molecule type" value="mRNA"/>
</dbReference>
<dbReference type="RefSeq" id="NP_001072178.1">
    <property type="nucleotide sequence ID" value="NM_001078710.1"/>
</dbReference>
<dbReference type="SMR" id="Q09JY9"/>
<dbReference type="FunCoup" id="Q09JY9">
    <property type="interactions" value="136"/>
</dbReference>
<dbReference type="STRING" id="8364.ENSXETP00000044934"/>
<dbReference type="PaxDb" id="8364-ENSXETP00000060716"/>
<dbReference type="GeneID" id="779568"/>
<dbReference type="KEGG" id="xtr:779568"/>
<dbReference type="AGR" id="Xenbase:XB-GENE-982291"/>
<dbReference type="CTD" id="357"/>
<dbReference type="Xenbase" id="XB-GENE-982291">
    <property type="gene designation" value="shroom2"/>
</dbReference>
<dbReference type="eggNOG" id="ENOG502QUU2">
    <property type="taxonomic scope" value="Eukaryota"/>
</dbReference>
<dbReference type="InParanoid" id="Q09JY9"/>
<dbReference type="OMA" id="AVWHTRY"/>
<dbReference type="OrthoDB" id="10063560at2759"/>
<dbReference type="Proteomes" id="UP000008143">
    <property type="component" value="Chromosome 2"/>
</dbReference>
<dbReference type="GO" id="GO:0016324">
    <property type="term" value="C:apical plasma membrane"/>
    <property type="evidence" value="ECO:0000315"/>
    <property type="project" value="HGNC-UCL"/>
</dbReference>
<dbReference type="GO" id="GO:0005923">
    <property type="term" value="C:bicellular tight junction"/>
    <property type="evidence" value="ECO:0000250"/>
    <property type="project" value="UniProtKB"/>
</dbReference>
<dbReference type="GO" id="GO:0005737">
    <property type="term" value="C:cytoplasm"/>
    <property type="evidence" value="ECO:0007669"/>
    <property type="project" value="UniProtKB-KW"/>
</dbReference>
<dbReference type="GO" id="GO:0005856">
    <property type="term" value="C:cytoskeleton"/>
    <property type="evidence" value="ECO:0000250"/>
    <property type="project" value="UniProtKB"/>
</dbReference>
<dbReference type="GO" id="GO:0005874">
    <property type="term" value="C:microtubule"/>
    <property type="evidence" value="ECO:0007669"/>
    <property type="project" value="UniProtKB-KW"/>
</dbReference>
<dbReference type="GO" id="GO:0005886">
    <property type="term" value="C:plasma membrane"/>
    <property type="evidence" value="ECO:0000250"/>
    <property type="project" value="UniProtKB"/>
</dbReference>
<dbReference type="GO" id="GO:0003779">
    <property type="term" value="F:actin binding"/>
    <property type="evidence" value="ECO:0000250"/>
    <property type="project" value="UniProtKB"/>
</dbReference>
<dbReference type="GO" id="GO:0051015">
    <property type="term" value="F:actin filament binding"/>
    <property type="evidence" value="ECO:0007669"/>
    <property type="project" value="InterPro"/>
</dbReference>
<dbReference type="GO" id="GO:0045176">
    <property type="term" value="P:apical protein localization"/>
    <property type="evidence" value="ECO:0000314"/>
    <property type="project" value="HGNC-UCL"/>
</dbReference>
<dbReference type="GO" id="GO:0007420">
    <property type="term" value="P:brain development"/>
    <property type="evidence" value="ECO:0000270"/>
    <property type="project" value="HGNC-UCL"/>
</dbReference>
<dbReference type="GO" id="GO:0043010">
    <property type="term" value="P:camera-type eye development"/>
    <property type="evidence" value="ECO:0000270"/>
    <property type="project" value="HGNC-UCL"/>
</dbReference>
<dbReference type="GO" id="GO:0048593">
    <property type="term" value="P:camera-type eye morphogenesis"/>
    <property type="evidence" value="ECO:0000315"/>
    <property type="project" value="HGNC-UCL"/>
</dbReference>
<dbReference type="GO" id="GO:0016477">
    <property type="term" value="P:cell migration"/>
    <property type="evidence" value="ECO:0000250"/>
    <property type="project" value="UniProtKB"/>
</dbReference>
<dbReference type="GO" id="GO:0043482">
    <property type="term" value="P:cellular pigment accumulation"/>
    <property type="evidence" value="ECO:0000315"/>
    <property type="project" value="HGNC-UCL"/>
</dbReference>
<dbReference type="GO" id="GO:0043583">
    <property type="term" value="P:ear development"/>
    <property type="evidence" value="ECO:0000270"/>
    <property type="project" value="HGNC-UCL"/>
</dbReference>
<dbReference type="GO" id="GO:0032401">
    <property type="term" value="P:establishment of melanosome localization"/>
    <property type="evidence" value="ECO:0000315"/>
    <property type="project" value="HGNC-UCL"/>
</dbReference>
<dbReference type="GO" id="GO:0008057">
    <property type="term" value="P:eye pigment granule organization"/>
    <property type="evidence" value="ECO:0000315"/>
    <property type="project" value="HGNC-UCL"/>
</dbReference>
<dbReference type="GO" id="GO:0002089">
    <property type="term" value="P:lens morphogenesis in camera-type eye"/>
    <property type="evidence" value="ECO:0000315"/>
    <property type="project" value="HGNC-UCL"/>
</dbReference>
<dbReference type="GO" id="GO:0032438">
    <property type="term" value="P:melanosome organization"/>
    <property type="evidence" value="ECO:0000315"/>
    <property type="project" value="HGNC-UCL"/>
</dbReference>
<dbReference type="Gene3D" id="2.30.42.10">
    <property type="match status" value="1"/>
</dbReference>
<dbReference type="Gene3D" id="6.10.250.3120">
    <property type="match status" value="1"/>
</dbReference>
<dbReference type="InterPro" id="IPR014800">
    <property type="entry name" value="ASD1_dom"/>
</dbReference>
<dbReference type="InterPro" id="IPR014799">
    <property type="entry name" value="ASD2_dom"/>
</dbReference>
<dbReference type="InterPro" id="IPR001478">
    <property type="entry name" value="PDZ"/>
</dbReference>
<dbReference type="InterPro" id="IPR036034">
    <property type="entry name" value="PDZ_sf"/>
</dbReference>
<dbReference type="InterPro" id="IPR027685">
    <property type="entry name" value="Shroom_fam"/>
</dbReference>
<dbReference type="PANTHER" id="PTHR15012">
    <property type="entry name" value="APICAL PROTEIN/SHROOM-RELATED"/>
    <property type="match status" value="1"/>
</dbReference>
<dbReference type="PANTHER" id="PTHR15012:SF8">
    <property type="entry name" value="PROTEIN SHROOM2"/>
    <property type="match status" value="1"/>
</dbReference>
<dbReference type="Pfam" id="PF08688">
    <property type="entry name" value="ASD1"/>
    <property type="match status" value="1"/>
</dbReference>
<dbReference type="Pfam" id="PF08687">
    <property type="entry name" value="ASD2"/>
    <property type="match status" value="1"/>
</dbReference>
<dbReference type="SMART" id="SM00228">
    <property type="entry name" value="PDZ"/>
    <property type="match status" value="1"/>
</dbReference>
<dbReference type="SUPFAM" id="SSF50156">
    <property type="entry name" value="PDZ domain-like"/>
    <property type="match status" value="1"/>
</dbReference>
<dbReference type="PROSITE" id="PS51306">
    <property type="entry name" value="ASD1"/>
    <property type="match status" value="1"/>
</dbReference>
<dbReference type="PROSITE" id="PS51307">
    <property type="entry name" value="ASD2"/>
    <property type="match status" value="1"/>
</dbReference>
<dbReference type="PROSITE" id="PS50106">
    <property type="entry name" value="PDZ"/>
    <property type="match status" value="1"/>
</dbReference>
<feature type="chain" id="PRO_0000286065" description="Protein Shroom2">
    <location>
        <begin position="1"/>
        <end position="1726"/>
    </location>
</feature>
<feature type="domain" description="PDZ" evidence="2">
    <location>
        <begin position="79"/>
        <end position="159"/>
    </location>
</feature>
<feature type="domain" description="ASD1" evidence="3">
    <location>
        <begin position="788"/>
        <end position="877"/>
    </location>
</feature>
<feature type="domain" description="ASD2" evidence="4">
    <location>
        <begin position="1427"/>
        <end position="1721"/>
    </location>
</feature>
<feature type="region of interest" description="Disordered" evidence="5">
    <location>
        <begin position="294"/>
        <end position="373"/>
    </location>
</feature>
<feature type="region of interest" description="Disordered" evidence="5">
    <location>
        <begin position="425"/>
        <end position="451"/>
    </location>
</feature>
<feature type="region of interest" description="Disordered" evidence="5">
    <location>
        <begin position="657"/>
        <end position="676"/>
    </location>
</feature>
<feature type="region of interest" description="Disordered" evidence="5">
    <location>
        <begin position="697"/>
        <end position="785"/>
    </location>
</feature>
<feature type="region of interest" description="Disordered" evidence="5">
    <location>
        <begin position="913"/>
        <end position="968"/>
    </location>
</feature>
<feature type="region of interest" description="Disordered" evidence="5">
    <location>
        <begin position="1007"/>
        <end position="1080"/>
    </location>
</feature>
<feature type="region of interest" description="Disordered" evidence="5">
    <location>
        <begin position="1092"/>
        <end position="1120"/>
    </location>
</feature>
<feature type="region of interest" description="Disordered" evidence="5">
    <location>
        <begin position="1166"/>
        <end position="1240"/>
    </location>
</feature>
<feature type="region of interest" description="Disordered" evidence="5">
    <location>
        <begin position="1269"/>
        <end position="1299"/>
    </location>
</feature>
<feature type="region of interest" description="Disordered" evidence="5">
    <location>
        <begin position="1471"/>
        <end position="1499"/>
    </location>
</feature>
<feature type="compositionally biased region" description="Polar residues" evidence="5">
    <location>
        <begin position="318"/>
        <end position="328"/>
    </location>
</feature>
<feature type="compositionally biased region" description="Basic and acidic residues" evidence="5">
    <location>
        <begin position="329"/>
        <end position="338"/>
    </location>
</feature>
<feature type="compositionally biased region" description="Basic and acidic residues" evidence="5">
    <location>
        <begin position="657"/>
        <end position="667"/>
    </location>
</feature>
<feature type="compositionally biased region" description="Polar residues" evidence="5">
    <location>
        <begin position="746"/>
        <end position="755"/>
    </location>
</feature>
<feature type="compositionally biased region" description="Polar residues" evidence="5">
    <location>
        <begin position="769"/>
        <end position="785"/>
    </location>
</feature>
<feature type="compositionally biased region" description="Low complexity" evidence="5">
    <location>
        <begin position="917"/>
        <end position="926"/>
    </location>
</feature>
<feature type="compositionally biased region" description="Basic and acidic residues" evidence="5">
    <location>
        <begin position="936"/>
        <end position="948"/>
    </location>
</feature>
<feature type="compositionally biased region" description="Polar residues" evidence="5">
    <location>
        <begin position="1054"/>
        <end position="1070"/>
    </location>
</feature>
<feature type="compositionally biased region" description="Polar residues" evidence="5">
    <location>
        <begin position="1104"/>
        <end position="1119"/>
    </location>
</feature>
<feature type="compositionally biased region" description="Low complexity" evidence="5">
    <location>
        <begin position="1191"/>
        <end position="1205"/>
    </location>
</feature>
<feature type="compositionally biased region" description="Polar residues" evidence="5">
    <location>
        <begin position="1209"/>
        <end position="1235"/>
    </location>
</feature>
<organism>
    <name type="scientific">Xenopus tropicalis</name>
    <name type="common">Western clawed frog</name>
    <name type="synonym">Silurana tropicalis</name>
    <dbReference type="NCBI Taxonomy" id="8364"/>
    <lineage>
        <taxon>Eukaryota</taxon>
        <taxon>Metazoa</taxon>
        <taxon>Chordata</taxon>
        <taxon>Craniata</taxon>
        <taxon>Vertebrata</taxon>
        <taxon>Euteleostomi</taxon>
        <taxon>Amphibia</taxon>
        <taxon>Batrachia</taxon>
        <taxon>Anura</taxon>
        <taxon>Pipoidea</taxon>
        <taxon>Pipidae</taxon>
        <taxon>Xenopodinae</taxon>
        <taxon>Xenopus</taxon>
        <taxon>Silurana</taxon>
    </lineage>
</organism>
<name>SHRM2_XENTR</name>